<proteinExistence type="evidence at transcript level"/>
<sequence>MLAWALLSAVLWSLAGVGSARSSLFSNEGFVYGTVGHPVKIYVKLHQTSPVLVCMDIDRASKETVDPIYLWIGPNENTLTGSSQINITNIGELVLKDFMESLSGHYSCTLSYKIVKAETQEETSLKKKYDFLVFAYREPDYSYRMAVRFTTKSCVGRYNDLLFRLLKKILDNLISDLLCHVIEPSYKCHSVKIPERDFVYELFVAFQVNPFAPGWKSMCNSSMDCEDVTNHNILKARDRIEEFFRSQAYILHHHFNITVPAMHFVDHSFQVTRIDNCRPGFGKNEGLHSNCASCCVVCSPGTFSPDMDVTCQTCVSAHVYGAKACP</sequence>
<reference key="1">
    <citation type="submission" date="2003-03" db="EMBL/GenBank/DDBJ databases">
        <title>Characterization of zona pellucida binding protein 2 (ZPBP2), a paralog of ZPBP1.</title>
        <authorList>
            <person name="Lin Y.-N."/>
            <person name="Yan W."/>
            <person name="Burns K.H."/>
            <person name="Matzuk M.M."/>
        </authorList>
    </citation>
    <scope>NUCLEOTIDE SEQUENCE [MRNA] (ISOFORMS 1 AND 2)</scope>
    <source>
        <strain>Sprague-Dawley</strain>
    </source>
</reference>
<reference key="2">
    <citation type="journal article" date="2004" name="Genome Res.">
        <title>The status, quality, and expansion of the NIH full-length cDNA project: the Mammalian Gene Collection (MGC).</title>
        <authorList>
            <consortium name="The MGC Project Team"/>
        </authorList>
    </citation>
    <scope>NUCLEOTIDE SEQUENCE [LARGE SCALE MRNA] (ISOFORM 1)</scope>
    <source>
        <tissue>Testis</tissue>
    </source>
</reference>
<comment type="function">
    <text evidence="2">Is implicated in sperm-oocyte interaction during fertilization.</text>
</comment>
<comment type="subcellular location">
    <subcellularLocation>
        <location evidence="1">Secreted</location>
    </subcellularLocation>
    <subcellularLocation>
        <location evidence="2">Cytoplasmic vesicle</location>
        <location evidence="2">Secretory vesicle</location>
        <location evidence="2">Acrosome</location>
    </subcellularLocation>
    <text evidence="2">Released after the acrosomal reaction.</text>
</comment>
<comment type="alternative products">
    <event type="alternative splicing"/>
    <isoform>
        <id>Q6X782-1</id>
        <name>1</name>
        <sequence type="displayed"/>
    </isoform>
    <isoform>
        <id>Q6X782-2</id>
        <name>2</name>
        <sequence type="described" ref="VSP_011686"/>
    </isoform>
</comment>
<comment type="PTM">
    <text evidence="2">N-glycosylated.</text>
</comment>
<comment type="similarity">
    <text evidence="5">Belongs to the zona pellucida-binding protein Sp38 family.</text>
</comment>
<keyword id="KW-0025">Alternative splicing</keyword>
<keyword id="KW-0968">Cytoplasmic vesicle</keyword>
<keyword id="KW-0325">Glycoprotein</keyword>
<keyword id="KW-1185">Reference proteome</keyword>
<keyword id="KW-0964">Secreted</keyword>
<keyword id="KW-0732">Signal</keyword>
<gene>
    <name type="primary">Zpbp2</name>
</gene>
<feature type="signal peptide" evidence="3">
    <location>
        <begin position="1"/>
        <end position="20"/>
    </location>
</feature>
<feature type="chain" id="PRO_0000041603" description="Zona pellucida-binding protein 2">
    <location>
        <begin position="21"/>
        <end position="326"/>
    </location>
</feature>
<feature type="glycosylation site" description="N-linked (GlcNAc...) asparagine" evidence="3">
    <location>
        <position position="86"/>
    </location>
</feature>
<feature type="glycosylation site" description="N-linked (GlcNAc...) asparagine" evidence="3">
    <location>
        <position position="220"/>
    </location>
</feature>
<feature type="glycosylation site" description="N-linked (GlcNAc...) asparagine" evidence="3">
    <location>
        <position position="256"/>
    </location>
</feature>
<feature type="splice variant" id="VSP_011686" description="In isoform 2." evidence="4">
    <location>
        <begin position="17"/>
        <end position="38"/>
    </location>
</feature>
<dbReference type="EMBL" id="AY251605">
    <property type="protein sequence ID" value="AAP83952.1"/>
    <property type="molecule type" value="mRNA"/>
</dbReference>
<dbReference type="EMBL" id="AY251606">
    <property type="protein sequence ID" value="AAP83953.1"/>
    <property type="molecule type" value="mRNA"/>
</dbReference>
<dbReference type="EMBL" id="BC082007">
    <property type="protein sequence ID" value="AAH82007.1"/>
    <property type="molecule type" value="mRNA"/>
</dbReference>
<dbReference type="RefSeq" id="NP_001007012.1">
    <molecule id="Q6X782-1"/>
    <property type="nucleotide sequence ID" value="NM_001007011.1"/>
</dbReference>
<dbReference type="FunCoup" id="Q6X782">
    <property type="interactions" value="67"/>
</dbReference>
<dbReference type="STRING" id="10116.ENSRNOP00000048783"/>
<dbReference type="GlyCosmos" id="Q6X782">
    <property type="glycosylation" value="3 sites, No reported glycans"/>
</dbReference>
<dbReference type="GlyGen" id="Q6X782">
    <property type="glycosylation" value="3 sites"/>
</dbReference>
<dbReference type="PaxDb" id="10116-ENSRNOP00000048783"/>
<dbReference type="Ensembl" id="ENSRNOT00000009535.7">
    <molecule id="Q6X782-2"/>
    <property type="protein sequence ID" value="ENSRNOP00000009535.5"/>
    <property type="gene ID" value="ENSRNOG00000007255.8"/>
</dbReference>
<dbReference type="Ensembl" id="ENSRNOT00000048647.5">
    <molecule id="Q6X782-1"/>
    <property type="protein sequence ID" value="ENSRNOP00000048783.2"/>
    <property type="gene ID" value="ENSRNOG00000007255.8"/>
</dbReference>
<dbReference type="GeneID" id="363676"/>
<dbReference type="KEGG" id="rno:363676"/>
<dbReference type="UCSC" id="RGD:1549726">
    <molecule id="Q6X782-1"/>
    <property type="organism name" value="rat"/>
</dbReference>
<dbReference type="AGR" id="RGD:1549726"/>
<dbReference type="CTD" id="124626"/>
<dbReference type="RGD" id="1549726">
    <property type="gene designation" value="Zpbp2"/>
</dbReference>
<dbReference type="eggNOG" id="ENOG502R75S">
    <property type="taxonomic scope" value="Eukaryota"/>
</dbReference>
<dbReference type="GeneTree" id="ENSGT00520000055647"/>
<dbReference type="HOGENOM" id="CLU_056016_1_0_1"/>
<dbReference type="InParanoid" id="Q6X782"/>
<dbReference type="OMA" id="KSCVGKY"/>
<dbReference type="OrthoDB" id="9403351at2759"/>
<dbReference type="PhylomeDB" id="Q6X782"/>
<dbReference type="TreeFam" id="TF335677"/>
<dbReference type="PRO" id="PR:Q6X782"/>
<dbReference type="Proteomes" id="UP000002494">
    <property type="component" value="Chromosome 10"/>
</dbReference>
<dbReference type="Bgee" id="ENSRNOG00000007255">
    <property type="expression patterns" value="Expressed in testis and 17 other cell types or tissues"/>
</dbReference>
<dbReference type="GO" id="GO:0001669">
    <property type="term" value="C:acrosomal vesicle"/>
    <property type="evidence" value="ECO:0000266"/>
    <property type="project" value="RGD"/>
</dbReference>
<dbReference type="GO" id="GO:0044297">
    <property type="term" value="C:cell body"/>
    <property type="evidence" value="ECO:0000266"/>
    <property type="project" value="RGD"/>
</dbReference>
<dbReference type="GO" id="GO:0005576">
    <property type="term" value="C:extracellular region"/>
    <property type="evidence" value="ECO:0007669"/>
    <property type="project" value="UniProtKB-SubCell"/>
</dbReference>
<dbReference type="GO" id="GO:0016020">
    <property type="term" value="C:membrane"/>
    <property type="evidence" value="ECO:0007669"/>
    <property type="project" value="GOC"/>
</dbReference>
<dbReference type="GO" id="GO:0002199">
    <property type="term" value="C:zona pellucida receptor complex"/>
    <property type="evidence" value="ECO:0000266"/>
    <property type="project" value="RGD"/>
</dbReference>
<dbReference type="GO" id="GO:0001675">
    <property type="term" value="P:acrosome assembly"/>
    <property type="evidence" value="ECO:0000266"/>
    <property type="project" value="RGD"/>
</dbReference>
<dbReference type="GO" id="GO:0007339">
    <property type="term" value="P:binding of sperm to zona pellucida"/>
    <property type="evidence" value="ECO:0000266"/>
    <property type="project" value="RGD"/>
</dbReference>
<dbReference type="GO" id="GO:0032922">
    <property type="term" value="P:circadian regulation of gene expression"/>
    <property type="evidence" value="ECO:0000266"/>
    <property type="project" value="RGD"/>
</dbReference>
<dbReference type="GO" id="GO:0046466">
    <property type="term" value="P:membrane lipid catabolic process"/>
    <property type="evidence" value="ECO:0000266"/>
    <property type="project" value="RGD"/>
</dbReference>
<dbReference type="GO" id="GO:0002638">
    <property type="term" value="P:negative regulation of immunoglobulin production"/>
    <property type="evidence" value="ECO:0000266"/>
    <property type="project" value="RGD"/>
</dbReference>
<dbReference type="GO" id="GO:0006665">
    <property type="term" value="P:sphingolipid metabolic process"/>
    <property type="evidence" value="ECO:0000266"/>
    <property type="project" value="RGD"/>
</dbReference>
<dbReference type="InterPro" id="IPR010857">
    <property type="entry name" value="Sp38-bd"/>
</dbReference>
<dbReference type="InterPro" id="IPR048805">
    <property type="entry name" value="ZPBP1/2_C"/>
</dbReference>
<dbReference type="InterPro" id="IPR048806">
    <property type="entry name" value="ZPBP1/2_N"/>
</dbReference>
<dbReference type="PANTHER" id="PTHR15443">
    <property type="entry name" value="ZONA PELLUCIDA BINDING PROTEIN SP38"/>
    <property type="match status" value="1"/>
</dbReference>
<dbReference type="PANTHER" id="PTHR15443:SF4">
    <property type="entry name" value="ZONA PELLUCIDA-BINDING PROTEIN 2"/>
    <property type="match status" value="1"/>
</dbReference>
<dbReference type="Pfam" id="PF20626">
    <property type="entry name" value="EGF_Sp38_C"/>
    <property type="match status" value="1"/>
</dbReference>
<dbReference type="Pfam" id="PF07354">
    <property type="entry name" value="Sp38"/>
    <property type="match status" value="1"/>
</dbReference>
<organism>
    <name type="scientific">Rattus norvegicus</name>
    <name type="common">Rat</name>
    <dbReference type="NCBI Taxonomy" id="10116"/>
    <lineage>
        <taxon>Eukaryota</taxon>
        <taxon>Metazoa</taxon>
        <taxon>Chordata</taxon>
        <taxon>Craniata</taxon>
        <taxon>Vertebrata</taxon>
        <taxon>Euteleostomi</taxon>
        <taxon>Mammalia</taxon>
        <taxon>Eutheria</taxon>
        <taxon>Euarchontoglires</taxon>
        <taxon>Glires</taxon>
        <taxon>Rodentia</taxon>
        <taxon>Myomorpha</taxon>
        <taxon>Muroidea</taxon>
        <taxon>Muridae</taxon>
        <taxon>Murinae</taxon>
        <taxon>Rattus</taxon>
    </lineage>
</organism>
<protein>
    <recommendedName>
        <fullName>Zona pellucida-binding protein 2</fullName>
    </recommendedName>
</protein>
<accession>Q6X782</accession>
<accession>Q6X781</accession>
<name>ZPBP2_RAT</name>
<evidence type="ECO:0000250" key="1"/>
<evidence type="ECO:0000250" key="2">
    <source>
        <dbReference type="UniProtKB" id="Q6X786"/>
    </source>
</evidence>
<evidence type="ECO:0000255" key="3"/>
<evidence type="ECO:0000303" key="4">
    <source ref="1"/>
</evidence>
<evidence type="ECO:0000305" key="5"/>